<proteinExistence type="inferred from homology"/>
<feature type="chain" id="PRO_0000453840" description="Cytochrome P450 monooxygenase ausI">
    <location>
        <begin position="1"/>
        <end position="500"/>
    </location>
</feature>
<feature type="transmembrane region" description="Helical" evidence="3">
    <location>
        <begin position="8"/>
        <end position="28"/>
    </location>
</feature>
<feature type="binding site" description="axial binding residue" evidence="1">
    <location>
        <position position="440"/>
    </location>
    <ligand>
        <name>heme</name>
        <dbReference type="ChEBI" id="CHEBI:30413"/>
    </ligand>
    <ligandPart>
        <name>Fe</name>
        <dbReference type="ChEBI" id="CHEBI:18248"/>
    </ligandPart>
</feature>
<comment type="function">
    <text evidence="2 4">Cytochrome P450 monooxygenase; part of the gene cluster B that mediates the biosynthesis of the fungal meroterpenoid acetoxydehydroaustin (PubMed:29076725). The first step of the pathway is the synthesis of 3,5-dimethylorsellinic acid by the polyketide synthase ausA (By similarity). 3,5-dimethylorsellinic acid is then prenylated by the polyprenyl transferase ausN (By similarity). Further epoxidation by the FAD-dependent monooxygenase ausM and cyclization by the probable terpene cyclase ausL lead to the formation of protoaustinoid A (By similarity). Protoaustinoid A is then oxidized to spiro-lactone preaustinoid A3 by the combined action of the FAD-binding monooxygenases ausB and ausC, and the dioxygenase ausE (By similarity). Acid-catalyzed keto-rearrangement and ring contraction of the tetraketide portion of preaustinoid A3 by ausJ lead to the formation of preaustinoid A4 (By similarity). The aldo-keto reductase ausK, with the help of ausH, is involved in the next step by transforming preaustinoid A4 into isoaustinone which is in turn hydroxylated by the P450 monooxygenase ausI to form austinolide (By similarity). The cytochrome P450 monooxygenase ausG then modifies austinolide to austinol (By similarity). Austinol is further acetylated to austin by the O-acetyltransferase ausP, which spontaneously changes to dehydroaustin (PubMed:29076725). The cytochrome P450 monooxygenase then converts dehydroaustin is into 7-dehydrodehydroaustin (PubMed:29076725). The hydroxylation catalyzed by ausR permits the second O-acetyltransferase ausQ to add an additional acetyl group to the molecule, leading to the formation of acetoxydehydroaustin (PubMed:29076725). Due to genetic rearrangements of the clusters and the subsequent loss of some enzymes, the end product of the Penicillium brasilianum austinoid biosynthesis clusters is acetoxydehydroaustin (PubMed:29076725).</text>
</comment>
<comment type="cofactor">
    <cofactor evidence="1">
        <name>heme</name>
        <dbReference type="ChEBI" id="CHEBI:30413"/>
    </cofactor>
</comment>
<comment type="pathway">
    <text evidence="7">Secondary metabolite biosynthesis; terpenoid biosynthesis.</text>
</comment>
<comment type="subcellular location">
    <subcellularLocation>
        <location evidence="3">Membrane</location>
        <topology evidence="3">Single-pass membrane protein</topology>
    </subcellularLocation>
</comment>
<comment type="miscellaneous">
    <text evidence="7">In A.calidoustus, the austinoid gene cluster lies on a contiguous DNA region, while clusters from E.nidulans and P.brasilianum are split in their respective genomes. Genetic rearrangements provoked variability among the clusters and E.nidulans produces the least number of austionoid derivatives with the end products austinol and dehydroaustinol, while P.brasilianum can produce until acetoxydehydroaustin, and A.calidoustus produces the highest number of identified derivatives.</text>
</comment>
<comment type="similarity">
    <text evidence="6">Belongs to the cytochrome P450 family.</text>
</comment>
<gene>
    <name evidence="5" type="primary">ausI</name>
    <name type="ORF">PMG11_06817</name>
</gene>
<name>AUSI_PENBI</name>
<accession>A0A0F7TSZ5</accession>
<reference key="1">
    <citation type="journal article" date="2015" name="Genome Announc.">
        <title>Draft genome sequence of the fungus Penicillium brasilianum MG11.</title>
        <authorList>
            <person name="Horn F."/>
            <person name="Linde J."/>
            <person name="Mattern D.J."/>
            <person name="Walther G."/>
            <person name="Guthke R."/>
            <person name="Brakhage A.A."/>
            <person name="Valiante V."/>
        </authorList>
    </citation>
    <scope>NUCLEOTIDE SEQUENCE [LARGE SCALE GENOMIC DNA]</scope>
    <source>
        <strain>MG11</strain>
    </source>
</reference>
<reference key="2">
    <citation type="journal article" date="2016" name="J. Am. Chem. Soc.">
        <title>Discovery of key dioxygenases that diverged the paraherquonin and acetoxydehydroaustin pathways in Penicillium brasilianum.</title>
        <authorList>
            <person name="Matsuda Y."/>
            <person name="Iwabuchi T."/>
            <person name="Fujimoto T."/>
            <person name="Awakawa T."/>
            <person name="Nakashima Y."/>
            <person name="Mori T."/>
            <person name="Zhang H."/>
            <person name="Hayashi F."/>
            <person name="Abe I."/>
        </authorList>
    </citation>
    <scope>FUNCTION</scope>
</reference>
<reference key="3">
    <citation type="journal article" date="2017" name="ACS Chem. Biol.">
        <title>Rewiring of the austinoid biosynthetic pathway in filamentous fungi.</title>
        <authorList>
            <person name="Mattern D.J."/>
            <person name="Valiante V."/>
            <person name="Horn F."/>
            <person name="Petzke L."/>
            <person name="Brakhage A.A."/>
        </authorList>
    </citation>
    <scope>FUNCTION</scope>
</reference>
<protein>
    <recommendedName>
        <fullName evidence="5">Cytochrome P450 monooxygenase ausI</fullName>
        <ecNumber evidence="7">1.-.-.-</ecNumber>
    </recommendedName>
    <alternativeName>
        <fullName evidence="5">Austinoid biosynthesis clusters protein I</fullName>
    </alternativeName>
</protein>
<dbReference type="EC" id="1.-.-.-" evidence="7"/>
<dbReference type="EMBL" id="CDHK01000006">
    <property type="protein sequence ID" value="CEJ58147.1"/>
    <property type="molecule type" value="Genomic_DNA"/>
</dbReference>
<dbReference type="SMR" id="A0A0F7TSZ5"/>
<dbReference type="STRING" id="104259.A0A0F7TSZ5"/>
<dbReference type="OrthoDB" id="1844152at2759"/>
<dbReference type="UniPathway" id="UPA00213"/>
<dbReference type="Proteomes" id="UP000042958">
    <property type="component" value="Unassembled WGS sequence"/>
</dbReference>
<dbReference type="GO" id="GO:0016020">
    <property type="term" value="C:membrane"/>
    <property type="evidence" value="ECO:0007669"/>
    <property type="project" value="UniProtKB-SubCell"/>
</dbReference>
<dbReference type="GO" id="GO:0020037">
    <property type="term" value="F:heme binding"/>
    <property type="evidence" value="ECO:0007669"/>
    <property type="project" value="InterPro"/>
</dbReference>
<dbReference type="GO" id="GO:0005506">
    <property type="term" value="F:iron ion binding"/>
    <property type="evidence" value="ECO:0007669"/>
    <property type="project" value="InterPro"/>
</dbReference>
<dbReference type="GO" id="GO:0004497">
    <property type="term" value="F:monooxygenase activity"/>
    <property type="evidence" value="ECO:0007669"/>
    <property type="project" value="UniProtKB-KW"/>
</dbReference>
<dbReference type="GO" id="GO:0016705">
    <property type="term" value="F:oxidoreductase activity, acting on paired donors, with incorporation or reduction of molecular oxygen"/>
    <property type="evidence" value="ECO:0007669"/>
    <property type="project" value="InterPro"/>
</dbReference>
<dbReference type="GO" id="GO:0043386">
    <property type="term" value="P:mycotoxin biosynthetic process"/>
    <property type="evidence" value="ECO:0007669"/>
    <property type="project" value="UniProtKB-ARBA"/>
</dbReference>
<dbReference type="GO" id="GO:0016114">
    <property type="term" value="P:terpenoid biosynthetic process"/>
    <property type="evidence" value="ECO:0007669"/>
    <property type="project" value="UniProtKB-UniPathway"/>
</dbReference>
<dbReference type="CDD" id="cd11041">
    <property type="entry name" value="CYP503A1-like"/>
    <property type="match status" value="1"/>
</dbReference>
<dbReference type="FunFam" id="1.10.630.10:FF:000059">
    <property type="entry name" value="Cytochrome P450 monooxygenase"/>
    <property type="match status" value="1"/>
</dbReference>
<dbReference type="Gene3D" id="1.10.630.10">
    <property type="entry name" value="Cytochrome P450"/>
    <property type="match status" value="1"/>
</dbReference>
<dbReference type="InterPro" id="IPR001128">
    <property type="entry name" value="Cyt_P450"/>
</dbReference>
<dbReference type="InterPro" id="IPR017972">
    <property type="entry name" value="Cyt_P450_CS"/>
</dbReference>
<dbReference type="InterPro" id="IPR002403">
    <property type="entry name" value="Cyt_P450_E_grp-IV"/>
</dbReference>
<dbReference type="InterPro" id="IPR036396">
    <property type="entry name" value="Cyt_P450_sf"/>
</dbReference>
<dbReference type="PANTHER" id="PTHR46206">
    <property type="entry name" value="CYTOCHROME P450"/>
    <property type="match status" value="1"/>
</dbReference>
<dbReference type="PANTHER" id="PTHR46206:SF10">
    <property type="entry name" value="CYTOCHROME P450 MONOOXYGENASE AUSI"/>
    <property type="match status" value="1"/>
</dbReference>
<dbReference type="Pfam" id="PF00067">
    <property type="entry name" value="p450"/>
    <property type="match status" value="1"/>
</dbReference>
<dbReference type="PRINTS" id="PR00465">
    <property type="entry name" value="EP450IV"/>
</dbReference>
<dbReference type="SUPFAM" id="SSF48264">
    <property type="entry name" value="Cytochrome P450"/>
    <property type="match status" value="1"/>
</dbReference>
<dbReference type="PROSITE" id="PS00086">
    <property type="entry name" value="CYTOCHROME_P450"/>
    <property type="match status" value="1"/>
</dbReference>
<sequence length="500" mass="56425">MLHETISLALLGQPLVPGLMVVSAILYLLYSTQQWRPKNLPLLNDAGPFDFLQATAVKRFRRDARQLIKSGFDSYNNVFAMRTDVGVELFASPEYADQFRNHPSLKVFPFTAKMHHGHLPGFELCRSQPVEDRILIESVRTQLAQSLGKMIQPLASDIGQAISDRWPSESGWQEIALGSVIERTIAQGTSSVYCLDEAWPEFVVKMEMALGMASAALSAWPVMLRRVVAKFLPECLELYRIMDAGRELMSRDMRRRVALQASTGEAPLNFFEWFKEASHGEEYDELILNLRIAFASMHGLCDHLVKILLRLSEDPQLVDDLRKEVIQVYKTHGWSKTALYHLKLMDSTFKEVQRVDPILFAVGRLAVADVALKDGLIIPKGQSIRISGHTMWDEDKYPDAAHFDAYRFYKLRQAPGQENTAQFTSPTSDHLGFGYGGRACPGRFFAAAVLKISLCHVLMKYDIKPANGETGPHVWEFAAAINANMTANVLVRRREPEIRL</sequence>
<organism>
    <name type="scientific">Penicillium brasilianum</name>
    <dbReference type="NCBI Taxonomy" id="104259"/>
    <lineage>
        <taxon>Eukaryota</taxon>
        <taxon>Fungi</taxon>
        <taxon>Dikarya</taxon>
        <taxon>Ascomycota</taxon>
        <taxon>Pezizomycotina</taxon>
        <taxon>Eurotiomycetes</taxon>
        <taxon>Eurotiomycetidae</taxon>
        <taxon>Eurotiales</taxon>
        <taxon>Aspergillaceae</taxon>
        <taxon>Penicillium</taxon>
    </lineage>
</organism>
<evidence type="ECO:0000250" key="1">
    <source>
        <dbReference type="UniProtKB" id="P04798"/>
    </source>
</evidence>
<evidence type="ECO:0000250" key="2">
    <source>
        <dbReference type="UniProtKB" id="Q5AR27"/>
    </source>
</evidence>
<evidence type="ECO:0000255" key="3"/>
<evidence type="ECO:0000269" key="4">
    <source>
    </source>
</evidence>
<evidence type="ECO:0000303" key="5">
    <source>
    </source>
</evidence>
<evidence type="ECO:0000305" key="6"/>
<evidence type="ECO:0000305" key="7">
    <source>
    </source>
</evidence>
<keyword id="KW-0349">Heme</keyword>
<keyword id="KW-0408">Iron</keyword>
<keyword id="KW-0472">Membrane</keyword>
<keyword id="KW-0479">Metal-binding</keyword>
<keyword id="KW-0503">Monooxygenase</keyword>
<keyword id="KW-0560">Oxidoreductase</keyword>
<keyword id="KW-1185">Reference proteome</keyword>
<keyword id="KW-0812">Transmembrane</keyword>
<keyword id="KW-1133">Transmembrane helix</keyword>